<accession>Q2FID6</accession>
<dbReference type="EMBL" id="CP000255">
    <property type="protein sequence ID" value="ABD22226.1"/>
    <property type="molecule type" value="Genomic_DNA"/>
</dbReference>
<dbReference type="RefSeq" id="WP_001068337.1">
    <property type="nucleotide sequence ID" value="NZ_CP027476.1"/>
</dbReference>
<dbReference type="SMR" id="Q2FID6"/>
<dbReference type="KEGG" id="saa:SAUSA300_0842"/>
<dbReference type="HOGENOM" id="CLU_182025_0_0_9"/>
<dbReference type="OMA" id="YDVIEYG"/>
<dbReference type="Proteomes" id="UP000001939">
    <property type="component" value="Chromosome"/>
</dbReference>
<dbReference type="HAMAP" id="MF_01542">
    <property type="entry name" value="UPF0349"/>
    <property type="match status" value="1"/>
</dbReference>
<dbReference type="InterPro" id="IPR009910">
    <property type="entry name" value="DUF1450"/>
</dbReference>
<dbReference type="InterPro" id="IPR022916">
    <property type="entry name" value="UPF0349"/>
</dbReference>
<dbReference type="NCBIfam" id="NF010190">
    <property type="entry name" value="PRK13669.1"/>
    <property type="match status" value="1"/>
</dbReference>
<dbReference type="Pfam" id="PF07293">
    <property type="entry name" value="DUF1450"/>
    <property type="match status" value="1"/>
</dbReference>
<sequence length="78" mass="8657">MNPIVEFCLSNMAKGGDYVFNQLENDPDVDVLEYGCLTHCGICSAGLYALVNGDIVEGDSPEELLQNIYAHIKETWIF</sequence>
<comment type="similarity">
    <text evidence="1">Belongs to the UPF0349 family.</text>
</comment>
<feature type="chain" id="PRO_0000300207" description="UPF0349 protein SAUSA300_0842">
    <location>
        <begin position="1"/>
        <end position="78"/>
    </location>
</feature>
<evidence type="ECO:0000255" key="1">
    <source>
        <dbReference type="HAMAP-Rule" id="MF_01542"/>
    </source>
</evidence>
<proteinExistence type="inferred from homology"/>
<gene>
    <name type="ordered locus">SAUSA300_0842</name>
</gene>
<organism>
    <name type="scientific">Staphylococcus aureus (strain USA300)</name>
    <dbReference type="NCBI Taxonomy" id="367830"/>
    <lineage>
        <taxon>Bacteria</taxon>
        <taxon>Bacillati</taxon>
        <taxon>Bacillota</taxon>
        <taxon>Bacilli</taxon>
        <taxon>Bacillales</taxon>
        <taxon>Staphylococcaceae</taxon>
        <taxon>Staphylococcus</taxon>
    </lineage>
</organism>
<reference key="1">
    <citation type="journal article" date="2006" name="Lancet">
        <title>Complete genome sequence of USA300, an epidemic clone of community-acquired meticillin-resistant Staphylococcus aureus.</title>
        <authorList>
            <person name="Diep B.A."/>
            <person name="Gill S.R."/>
            <person name="Chang R.F."/>
            <person name="Phan T.H."/>
            <person name="Chen J.H."/>
            <person name="Davidson M.G."/>
            <person name="Lin F."/>
            <person name="Lin J."/>
            <person name="Carleton H.A."/>
            <person name="Mongodin E.F."/>
            <person name="Sensabaugh G.F."/>
            <person name="Perdreau-Remington F."/>
        </authorList>
    </citation>
    <scope>NUCLEOTIDE SEQUENCE [LARGE SCALE GENOMIC DNA]</scope>
    <source>
        <strain>USA300</strain>
    </source>
</reference>
<protein>
    <recommendedName>
        <fullName evidence="1">UPF0349 protein SAUSA300_0842</fullName>
    </recommendedName>
</protein>
<name>Y842_STAA3</name>